<keyword id="KW-0067">ATP-binding</keyword>
<keyword id="KW-0418">Kinase</keyword>
<keyword id="KW-0460">Magnesium</keyword>
<keyword id="KW-0547">Nucleotide-binding</keyword>
<keyword id="KW-1185">Reference proteome</keyword>
<keyword id="KW-0723">Serine/threonine-protein kinase</keyword>
<keyword id="KW-0808">Transferase</keyword>
<keyword id="KW-0843">Virulence</keyword>
<protein>
    <recommendedName>
        <fullName evidence="13">Mitogen-activated protein kinase PMK11</fullName>
        <shortName evidence="13">MAPK PMK1</shortName>
        <ecNumber evidence="12">2.7.11.24</ecNumber>
    </recommendedName>
</protein>
<accession>G4N0Z0</accession>
<evidence type="ECO:0000255" key="1">
    <source>
        <dbReference type="PROSITE-ProRule" id="PRU00159"/>
    </source>
</evidence>
<evidence type="ECO:0000255" key="2">
    <source>
        <dbReference type="RuleBase" id="RU361165"/>
    </source>
</evidence>
<evidence type="ECO:0000269" key="3">
    <source>
    </source>
</evidence>
<evidence type="ECO:0000269" key="4">
    <source>
    </source>
</evidence>
<evidence type="ECO:0000269" key="5">
    <source>
    </source>
</evidence>
<evidence type="ECO:0000269" key="6">
    <source>
    </source>
</evidence>
<evidence type="ECO:0000269" key="7">
    <source>
    </source>
</evidence>
<evidence type="ECO:0000269" key="8">
    <source>
    </source>
</evidence>
<evidence type="ECO:0000269" key="9">
    <source>
    </source>
</evidence>
<evidence type="ECO:0000269" key="10">
    <source>
    </source>
</evidence>
<evidence type="ECO:0000269" key="11">
    <source>
    </source>
</evidence>
<evidence type="ECO:0000269" key="12">
    <source>
    </source>
</evidence>
<evidence type="ECO:0000303" key="13">
    <source>
    </source>
</evidence>
<evidence type="ECO:0000305" key="14"/>
<sequence length="356" mass="41303">MSRANPPSNSSGSRKISFNVSEQYDIQDVVGEGAYGVVCSAIHKPSGQKVAIKKITPFDHSMFCLRTLREMKLLRYFNHENIISILDIQKPRSYETFNEVYLIQELMETDMHRVIRTQDLSDDHCQYFIYQTLRALKAMHSANVLHRDLKPSNLLLNANCDLKVCDFGLARSAASQEDNSGFMTEYVATRWYRAPEIMLTFKEYTKAIDVWSVGCILAEMLSGKPLFPGKDYHHQLTLILDVLGTPTMEDYYGIKSRRAREYIRSLPFKKKVPFRTLFPKTSDLALDLLEKLLAFNPVKRITVEEALKHPYLEPYHDPDDEPTAPPIPEEFFDFDKHKDNLSKEQLKQFIYQEIMR</sequence>
<feature type="chain" id="PRO_0000453091" description="Mitogen-activated protein kinase PMK11">
    <location>
        <begin position="1"/>
        <end position="356"/>
    </location>
</feature>
<feature type="domain" description="Protein kinase" evidence="1">
    <location>
        <begin position="24"/>
        <end position="312"/>
    </location>
</feature>
<feature type="binding site" evidence="1">
    <location>
        <begin position="30"/>
        <end position="38"/>
    </location>
    <ligand>
        <name>ATP</name>
        <dbReference type="ChEBI" id="CHEBI:30616"/>
    </ligand>
</feature>
<feature type="binding site" evidence="1">
    <location>
        <position position="53"/>
    </location>
    <ligand>
        <name>ATP</name>
        <dbReference type="ChEBI" id="CHEBI:30616"/>
    </ligand>
</feature>
<organism>
    <name type="scientific">Pyricularia oryzae (strain 70-15 / ATCC MYA-4617 / FGSC 8958)</name>
    <name type="common">Rice blast fungus</name>
    <name type="synonym">Magnaporthe oryzae</name>
    <dbReference type="NCBI Taxonomy" id="242507"/>
    <lineage>
        <taxon>Eukaryota</taxon>
        <taxon>Fungi</taxon>
        <taxon>Dikarya</taxon>
        <taxon>Ascomycota</taxon>
        <taxon>Pezizomycotina</taxon>
        <taxon>Sordariomycetes</taxon>
        <taxon>Sordariomycetidae</taxon>
        <taxon>Magnaporthales</taxon>
        <taxon>Pyriculariaceae</taxon>
        <taxon>Pyricularia</taxon>
    </lineage>
</organism>
<comment type="function">
    <text evidence="3 4 5 6 7 8 9 10 11 12">Mitogen-activated protein kinase; part of the MST11-MST7-PMK1 MAP kinase (MAPK) cascade that is essential for appressorium formation, penetration and invasive growth (PubMed:11952120, PubMed:15749760, PubMed:21283781, PubMed:23085322, PubMed:23454094, PubMed:27059015, PubMed:8946911). Central regulator of appressorium development that acts downstream of the cAMP signal (PubMed:23591122, PubMed:8946911). The MST11-MST7-PMK1 MAP kinase cascade transduces signals from the cell surface sensors MDB2 and SHO1 that recognize various surface signals such as surface hydrophobicity, cutin monomers, and rice leaf waxes (PubMed:21283781). Regulates expression of secreted fungal effector proteins implicated of host immune defenses, preventing reactive oxygen species generation and excessive callose deposition at plasmodesmata (PubMed:29567712). Furthermore, controls the hyphal constriction required for fungal growth from one rice cell to the neighboring cell, enabling host tissue colonization and blast disease (PubMed:29567712). Targets downstream of the PMK1-MAPK pathway include transcription factor MST12 and pathogenicity-related genes GAS1 and GAS2, both of which are expressed during appressorium formation, even if regulation of MST12 is not associated with expression of GAS1 or GAS2 (PubMed:11952120, PubMed:12215509, PubMed:23454094).</text>
</comment>
<comment type="catalytic activity">
    <reaction evidence="12">
        <text>L-seryl-[protein] + ATP = O-phospho-L-seryl-[protein] + ADP + H(+)</text>
        <dbReference type="Rhea" id="RHEA:17989"/>
        <dbReference type="Rhea" id="RHEA-COMP:9863"/>
        <dbReference type="Rhea" id="RHEA-COMP:11604"/>
        <dbReference type="ChEBI" id="CHEBI:15378"/>
        <dbReference type="ChEBI" id="CHEBI:29999"/>
        <dbReference type="ChEBI" id="CHEBI:30616"/>
        <dbReference type="ChEBI" id="CHEBI:83421"/>
        <dbReference type="ChEBI" id="CHEBI:456216"/>
        <dbReference type="EC" id="2.7.11.24"/>
    </reaction>
    <physiologicalReaction direction="left-to-right" evidence="12">
        <dbReference type="Rhea" id="RHEA:17990"/>
    </physiologicalReaction>
</comment>
<comment type="catalytic activity">
    <reaction evidence="12">
        <text>L-threonyl-[protein] + ATP = O-phospho-L-threonyl-[protein] + ADP + H(+)</text>
        <dbReference type="Rhea" id="RHEA:46608"/>
        <dbReference type="Rhea" id="RHEA-COMP:11060"/>
        <dbReference type="Rhea" id="RHEA-COMP:11605"/>
        <dbReference type="ChEBI" id="CHEBI:15378"/>
        <dbReference type="ChEBI" id="CHEBI:30013"/>
        <dbReference type="ChEBI" id="CHEBI:30616"/>
        <dbReference type="ChEBI" id="CHEBI:61977"/>
        <dbReference type="ChEBI" id="CHEBI:456216"/>
        <dbReference type="EC" id="2.7.11.24"/>
    </reaction>
    <physiologicalReaction direction="left-to-right" evidence="12">
        <dbReference type="Rhea" id="RHEA:46609"/>
    </physiologicalReaction>
</comment>
<comment type="cofactor">
    <cofactor evidence="2">
        <name>Mg(2+)</name>
        <dbReference type="ChEBI" id="CHEBI:18420"/>
    </cofactor>
</comment>
<comment type="PTM">
    <text evidence="5">Phosphorylated by MST7.</text>
</comment>
<comment type="disruption phenotype">
    <text evidence="4 6 8 9 12">Impairs the formation of appressoria and the ability to infect rice plants, even when inoculated onto wounded leaves (PubMed:23454094, PubMed:23591122, PubMed:8946911). Leads to decreased transcription of the cell surface sensors MSB2 and SHO1 (PubMed:21283781). Blocks the transcription of both virulence genes GAS1 and GAS2 during appressorium formation (PubMed:12215509).</text>
</comment>
<comment type="similarity">
    <text evidence="14">Belongs to the protein kinase superfamily. CMGC Ser/Thr protein kinase family. MAP kinase subfamily.</text>
</comment>
<proteinExistence type="evidence at protein level"/>
<name>PMK1_PYRO7</name>
<dbReference type="EC" id="2.7.11.24" evidence="12"/>
<dbReference type="EMBL" id="CM001233">
    <property type="protein sequence ID" value="EHA52368.1"/>
    <property type="molecule type" value="Genomic_DNA"/>
</dbReference>
<dbReference type="RefSeq" id="XP_003712175.1">
    <property type="nucleotide sequence ID" value="XM_003712127.1"/>
</dbReference>
<dbReference type="SMR" id="G4N0Z0"/>
<dbReference type="FunCoup" id="G4N0Z0">
    <property type="interactions" value="571"/>
</dbReference>
<dbReference type="STRING" id="242507.G4N0Z0"/>
<dbReference type="EnsemblFungi" id="MGG_09565T0">
    <property type="protein sequence ID" value="MGG_09565T0"/>
    <property type="gene ID" value="MGG_09565"/>
</dbReference>
<dbReference type="GeneID" id="2680463"/>
<dbReference type="KEGG" id="mgr:MGG_09565"/>
<dbReference type="VEuPathDB" id="FungiDB:MGG_09565"/>
<dbReference type="eggNOG" id="KOG0660">
    <property type="taxonomic scope" value="Eukaryota"/>
</dbReference>
<dbReference type="HOGENOM" id="CLU_000288_181_1_1"/>
<dbReference type="InParanoid" id="G4N0Z0"/>
<dbReference type="OMA" id="SFFDFDY"/>
<dbReference type="OrthoDB" id="192887at2759"/>
<dbReference type="PHI-base" id="PHI:2163"/>
<dbReference type="Proteomes" id="UP000009058">
    <property type="component" value="Chromosome 3"/>
</dbReference>
<dbReference type="GO" id="GO:0005524">
    <property type="term" value="F:ATP binding"/>
    <property type="evidence" value="ECO:0007669"/>
    <property type="project" value="UniProtKB-KW"/>
</dbReference>
<dbReference type="GO" id="GO:0004707">
    <property type="term" value="F:MAP kinase activity"/>
    <property type="evidence" value="ECO:0000314"/>
    <property type="project" value="GO_Central"/>
</dbReference>
<dbReference type="GO" id="GO:0106310">
    <property type="term" value="F:protein serine kinase activity"/>
    <property type="evidence" value="ECO:0007669"/>
    <property type="project" value="RHEA"/>
</dbReference>
<dbReference type="GO" id="GO:0030448">
    <property type="term" value="P:hyphal growth"/>
    <property type="evidence" value="ECO:0000315"/>
    <property type="project" value="PHI-base"/>
</dbReference>
<dbReference type="GO" id="GO:0000165">
    <property type="term" value="P:MAPK cascade"/>
    <property type="evidence" value="ECO:0000314"/>
    <property type="project" value="GO_Central"/>
</dbReference>
<dbReference type="GO" id="GO:0075018">
    <property type="term" value="P:positive regulation of appressorium formation"/>
    <property type="evidence" value="ECO:0000314"/>
    <property type="project" value="PHI-base"/>
</dbReference>
<dbReference type="GO" id="GO:0000921">
    <property type="term" value="P:septin ring assembly"/>
    <property type="evidence" value="ECO:0000315"/>
    <property type="project" value="PHI-base"/>
</dbReference>
<dbReference type="GO" id="GO:0140649">
    <property type="term" value="P:symbiont-mediated cell-to-cell migration by invasive hypha"/>
    <property type="evidence" value="ECO:0000315"/>
    <property type="project" value="PHI-base"/>
</dbReference>
<dbReference type="CDD" id="cd07849">
    <property type="entry name" value="STKc_ERK1_2_like"/>
    <property type="match status" value="1"/>
</dbReference>
<dbReference type="FunFam" id="1.10.510.10:FF:000040">
    <property type="entry name" value="Mitogen-activated protein kinase"/>
    <property type="match status" value="1"/>
</dbReference>
<dbReference type="FunFam" id="3.30.200.20:FF:000073">
    <property type="entry name" value="Mitogen-activated protein kinase"/>
    <property type="match status" value="1"/>
</dbReference>
<dbReference type="Gene3D" id="3.30.200.20">
    <property type="entry name" value="Phosphorylase Kinase, domain 1"/>
    <property type="match status" value="1"/>
</dbReference>
<dbReference type="Gene3D" id="1.10.510.10">
    <property type="entry name" value="Transferase(Phosphotransferase) domain 1"/>
    <property type="match status" value="1"/>
</dbReference>
<dbReference type="InterPro" id="IPR011009">
    <property type="entry name" value="Kinase-like_dom_sf"/>
</dbReference>
<dbReference type="InterPro" id="IPR050117">
    <property type="entry name" value="MAP_kinase"/>
</dbReference>
<dbReference type="InterPro" id="IPR003527">
    <property type="entry name" value="MAP_kinase_CS"/>
</dbReference>
<dbReference type="InterPro" id="IPR000719">
    <property type="entry name" value="Prot_kinase_dom"/>
</dbReference>
<dbReference type="InterPro" id="IPR017441">
    <property type="entry name" value="Protein_kinase_ATP_BS"/>
</dbReference>
<dbReference type="InterPro" id="IPR008271">
    <property type="entry name" value="Ser/Thr_kinase_AS"/>
</dbReference>
<dbReference type="PANTHER" id="PTHR24055">
    <property type="entry name" value="MITOGEN-ACTIVATED PROTEIN KINASE"/>
    <property type="match status" value="1"/>
</dbReference>
<dbReference type="Pfam" id="PF00069">
    <property type="entry name" value="Pkinase"/>
    <property type="match status" value="1"/>
</dbReference>
<dbReference type="SMART" id="SM00220">
    <property type="entry name" value="S_TKc"/>
    <property type="match status" value="1"/>
</dbReference>
<dbReference type="SUPFAM" id="SSF56112">
    <property type="entry name" value="Protein kinase-like (PK-like)"/>
    <property type="match status" value="1"/>
</dbReference>
<dbReference type="PROSITE" id="PS01351">
    <property type="entry name" value="MAPK"/>
    <property type="match status" value="1"/>
</dbReference>
<dbReference type="PROSITE" id="PS00107">
    <property type="entry name" value="PROTEIN_KINASE_ATP"/>
    <property type="match status" value="1"/>
</dbReference>
<dbReference type="PROSITE" id="PS50011">
    <property type="entry name" value="PROTEIN_KINASE_DOM"/>
    <property type="match status" value="1"/>
</dbReference>
<dbReference type="PROSITE" id="PS00108">
    <property type="entry name" value="PROTEIN_KINASE_ST"/>
    <property type="match status" value="1"/>
</dbReference>
<reference key="1">
    <citation type="journal article" date="2005" name="Nature">
        <title>The genome sequence of the rice blast fungus Magnaporthe grisea.</title>
        <authorList>
            <person name="Dean R.A."/>
            <person name="Talbot N.J."/>
            <person name="Ebbole D.J."/>
            <person name="Farman M.L."/>
            <person name="Mitchell T.K."/>
            <person name="Orbach M.J."/>
            <person name="Thon M.R."/>
            <person name="Kulkarni R."/>
            <person name="Xu J.-R."/>
            <person name="Pan H."/>
            <person name="Read N.D."/>
            <person name="Lee Y.-H."/>
            <person name="Carbone I."/>
            <person name="Brown D."/>
            <person name="Oh Y.Y."/>
            <person name="Donofrio N."/>
            <person name="Jeong J.S."/>
            <person name="Soanes D.M."/>
            <person name="Djonovic S."/>
            <person name="Kolomiets E."/>
            <person name="Rehmeyer C."/>
            <person name="Li W."/>
            <person name="Harding M."/>
            <person name="Kim S."/>
            <person name="Lebrun M.-H."/>
            <person name="Bohnert H."/>
            <person name="Coughlan S."/>
            <person name="Butler J."/>
            <person name="Calvo S.E."/>
            <person name="Ma L.-J."/>
            <person name="Nicol R."/>
            <person name="Purcell S."/>
            <person name="Nusbaum C."/>
            <person name="Galagan J.E."/>
            <person name="Birren B.W."/>
        </authorList>
    </citation>
    <scope>NUCLEOTIDE SEQUENCE [LARGE SCALE GENOMIC DNA]</scope>
    <source>
        <strain>70-15 / ATCC MYA-4617 / FGSC 8958</strain>
    </source>
</reference>
<reference key="2">
    <citation type="journal article" date="1996" name="Genes Dev.">
        <title>MAP kinase and cAMP signaling regulate infection structure formation and pathogenic growth in the rice blast fungus Magnaporthe grisea.</title>
        <authorList>
            <person name="Xu J.R."/>
            <person name="Hamer J.E."/>
        </authorList>
    </citation>
    <scope>FUNCTION</scope>
    <scope>CATALYTIC ACTIVITY</scope>
    <scope>DISRUPTION PHENOTYPE</scope>
</reference>
<reference key="3">
    <citation type="journal article" date="2002" name="Mol. Plant Microbe Interact.">
        <title>MST12 regulates infectious growth but not appressorium formation in the rice blast fungus Magnaporthe grisea.</title>
        <authorList>
            <person name="Park G."/>
            <person name="Xue C."/>
            <person name="Zheng L."/>
            <person name="Lam S."/>
            <person name="Xu J.R."/>
        </authorList>
    </citation>
    <scope>FUNCTION</scope>
</reference>
<reference key="4">
    <citation type="journal article" date="2002" name="Plant Cell">
        <title>Two novel fungal virulence genes specifically expressed in appressoria of the rice blast fungus.</title>
        <authorList>
            <person name="Xue C."/>
            <person name="Park G."/>
            <person name="Choi W."/>
            <person name="Zheng L."/>
            <person name="Dean R.A."/>
            <person name="Xu J.R."/>
        </authorList>
    </citation>
    <scope>FUNCTION</scope>
    <scope>DISRUPTION PHENOTYPE</scope>
</reference>
<reference key="5">
    <citation type="journal article" date="2005" name="Plant Cell">
        <title>A mitogen-activated protein kinase cascade regulating infection-related morphogenesis in Magnaporthe grisea.</title>
        <authorList>
            <person name="Zhao X."/>
            <person name="Kim Y."/>
            <person name="Park G."/>
            <person name="Xu J.R."/>
        </authorList>
    </citation>
    <scope>FUNCTION</scope>
    <scope>PHOSPHORYLATION</scope>
</reference>
<reference key="6">
    <citation type="journal article" date="2011" name="PLoS Pathog.">
        <title>Multiple plant surface signals are sensed by different mechanisms in the rice blast fungus for appressorium formation.</title>
        <authorList>
            <person name="Liu W."/>
            <person name="Zhou X."/>
            <person name="Li G."/>
            <person name="Li L."/>
            <person name="Kong L."/>
            <person name="Wang C."/>
            <person name="Zhang H."/>
            <person name="Xu J.R."/>
        </authorList>
    </citation>
    <scope>FUNCTION</scope>
    <scope>DISRUPTION PHENOTYPE</scope>
</reference>
<reference key="7">
    <citation type="journal article" date="2012" name="Curr. Opin. Microbiol.">
        <title>Genetic control of infection-related development in Magnaporthe oryzae.</title>
        <authorList>
            <person name="Li G."/>
            <person name="Zhou X."/>
            <person name="Xu J.R."/>
        </authorList>
    </citation>
    <scope>REVIEW ON FUNCTION</scope>
</reference>
<reference key="8">
    <citation type="journal article" date="2013" name="Fungal Genet. Biol.">
        <title>Differences between appressoria formed by germ tubes and appressorium-like structures developed by hyphal tips in Magnaporthe oryzae.</title>
        <authorList>
            <person name="Kong L.A."/>
            <person name="Li G.T."/>
            <person name="Liu Y."/>
            <person name="Liu M.G."/>
            <person name="Zhang S.J."/>
            <person name="Yang J."/>
            <person name="Zhou X.Y."/>
            <person name="Peng Y.L."/>
            <person name="Xu J.R."/>
        </authorList>
    </citation>
    <scope>FUNCTION</scope>
    <scope>DISRUPTION PHENOTYPE</scope>
</reference>
<reference key="9">
    <citation type="journal article" date="2013" name="Gene Expr. Patterns">
        <title>Complexity of roles and regulation of the PMK1-MAPK pathway in mycelium development, conidiation and appressorium formation in Magnaporthe oryzae.</title>
        <authorList>
            <person name="Jin Q."/>
            <person name="Li C."/>
            <person name="Li Y."/>
            <person name="Shang J."/>
            <person name="Li D."/>
            <person name="Chen B."/>
            <person name="Dong H."/>
        </authorList>
    </citation>
    <scope>FUNCTION</scope>
    <scope>DISRUPTION PHENOTYPE</scope>
</reference>
<reference key="10">
    <citation type="journal article" date="2016" name="Environ. Microbiol.">
        <title>Thioredoxins are involved in the activation of the PMK1 MAP kinase pathway during appressorium penetration and invasive growth in Magnaporthe oryzae.</title>
        <authorList>
            <person name="Zhang S."/>
            <person name="Jiang C."/>
            <person name="Zhang Q."/>
            <person name="Qi L."/>
            <person name="Li C."/>
            <person name="Xu J.R."/>
        </authorList>
    </citation>
    <scope>FUNCTION</scope>
</reference>
<reference key="11">
    <citation type="journal article" date="2018" name="Science">
        <title>A single fungal MAP kinase controls plant cell-to-cell invasion by the rice blast fungus.</title>
        <authorList>
            <person name="Sakulkoo W."/>
            <person name="Oses-Ruiz M."/>
            <person name="Oliveira Garcia E."/>
            <person name="Soanes D.M."/>
            <person name="Littlejohn G.R."/>
            <person name="Hacker C."/>
            <person name="Correia A."/>
            <person name="Valent B."/>
            <person name="Talbot N.J."/>
        </authorList>
    </citation>
    <scope>FUNCTION</scope>
    <scope>DISRUPTION PHENOTYPE</scope>
</reference>
<gene>
    <name evidence="13" type="primary">PMK1</name>
    <name type="ORF">MGG_09565</name>
</gene>